<proteinExistence type="inferred from homology"/>
<name>ATPA_METSB</name>
<protein>
    <recommendedName>
        <fullName evidence="1">ATP synthase subunit alpha</fullName>
        <ecNumber evidence="1">7.1.2.2</ecNumber>
    </recommendedName>
    <alternativeName>
        <fullName evidence="1">ATP synthase F1 sector subunit alpha</fullName>
    </alternativeName>
    <alternativeName>
        <fullName evidence="1">F-ATPase subunit alpha</fullName>
    </alternativeName>
</protein>
<keyword id="KW-0066">ATP synthesis</keyword>
<keyword id="KW-0067">ATP-binding</keyword>
<keyword id="KW-0997">Cell inner membrane</keyword>
<keyword id="KW-1003">Cell membrane</keyword>
<keyword id="KW-0139">CF(1)</keyword>
<keyword id="KW-0375">Hydrogen ion transport</keyword>
<keyword id="KW-0406">Ion transport</keyword>
<keyword id="KW-0472">Membrane</keyword>
<keyword id="KW-0547">Nucleotide-binding</keyword>
<keyword id="KW-1185">Reference proteome</keyword>
<keyword id="KW-1278">Translocase</keyword>
<keyword id="KW-0813">Transport</keyword>
<evidence type="ECO:0000255" key="1">
    <source>
        <dbReference type="HAMAP-Rule" id="MF_01346"/>
    </source>
</evidence>
<reference key="1">
    <citation type="journal article" date="2010" name="J. Bacteriol.">
        <title>Complete genome sequence of the aerobic facultative methanotroph Methylocella silvestris BL2.</title>
        <authorList>
            <person name="Chen Y."/>
            <person name="Crombie A."/>
            <person name="Rahman M.T."/>
            <person name="Dedysh S.N."/>
            <person name="Liesack W."/>
            <person name="Stott M.B."/>
            <person name="Alam M."/>
            <person name="Theisen A.R."/>
            <person name="Murrell J.C."/>
            <person name="Dunfield P.F."/>
        </authorList>
    </citation>
    <scope>NUCLEOTIDE SEQUENCE [LARGE SCALE GENOMIC DNA]</scope>
    <source>
        <strain>DSM 15510 / CIP 108128 / LMG 27833 / NCIMB 13906 / BL2</strain>
    </source>
</reference>
<feature type="chain" id="PRO_1000166547" description="ATP synthase subunit alpha">
    <location>
        <begin position="1"/>
        <end position="509"/>
    </location>
</feature>
<feature type="binding site" evidence="1">
    <location>
        <begin position="169"/>
        <end position="176"/>
    </location>
    <ligand>
        <name>ATP</name>
        <dbReference type="ChEBI" id="CHEBI:30616"/>
    </ligand>
</feature>
<feature type="site" description="Required for activity" evidence="1">
    <location>
        <position position="370"/>
    </location>
</feature>
<comment type="function">
    <text evidence="1">Produces ATP from ADP in the presence of a proton gradient across the membrane. The alpha chain is a regulatory subunit.</text>
</comment>
<comment type="catalytic activity">
    <reaction evidence="1">
        <text>ATP + H2O + 4 H(+)(in) = ADP + phosphate + 5 H(+)(out)</text>
        <dbReference type="Rhea" id="RHEA:57720"/>
        <dbReference type="ChEBI" id="CHEBI:15377"/>
        <dbReference type="ChEBI" id="CHEBI:15378"/>
        <dbReference type="ChEBI" id="CHEBI:30616"/>
        <dbReference type="ChEBI" id="CHEBI:43474"/>
        <dbReference type="ChEBI" id="CHEBI:456216"/>
        <dbReference type="EC" id="7.1.2.2"/>
    </reaction>
</comment>
<comment type="subunit">
    <text evidence="1">F-type ATPases have 2 components, CF(1) - the catalytic core - and CF(0) - the membrane proton channel. CF(1) has five subunits: alpha(3), beta(3), gamma(1), delta(1), epsilon(1). CF(0) has three main subunits: a(1), b(2) and c(9-12). The alpha and beta chains form an alternating ring which encloses part of the gamma chain. CF(1) is attached to CF(0) by a central stalk formed by the gamma and epsilon chains, while a peripheral stalk is formed by the delta and b chains.</text>
</comment>
<comment type="subcellular location">
    <subcellularLocation>
        <location evidence="1">Cell inner membrane</location>
        <topology evidence="1">Peripheral membrane protein</topology>
    </subcellularLocation>
</comment>
<comment type="similarity">
    <text evidence="1">Belongs to the ATPase alpha/beta chains family.</text>
</comment>
<sequence length="509" mass="54743">MDIRAAEISQILKNEIANFGNEASVTEVGQVLSVGDGIARVYGLDNVEAGEMVEFENGVRGMALNLEVDNVGVVIFGSDRDIKEGQTVKRTGAIVDVPVGRGLLGRVVDALGNPIDGKGPIPYETRSRVDVKAPGIIPRKSVHEPMATGLKAIDALIPIGRGQRELIIGDRQTGKTAVALDAILNQKSANQGTDESAKLYCVYVAVGQKRSTVAQFVKVLEENGALEYSIIVAATASDPAPMQFLAPFSGCAMGEYFRDNAMHALIVYDDLSKQAVAYRQMSLLLRRPPGREAYPGDVFYLHSRLLERAAKLRDANGAGSLTALPVIETQANDVSAYIPTNVISITDGQIFLETDLFYQGIRPAVNVGLSVSRVGSAAQTKAMKKVAGKIKGELAQYREMAAFAQFGSDLDATTQRLLARGSRLTELLKQPQFAPLKMEEQVVVIYAGVNGYLDALPVARVRAFEDGLLALVRTSHGDLLETIRSSKDLSDASTQALKAIVETYAKNFA</sequence>
<accession>B8EQP9</accession>
<gene>
    <name evidence="1" type="primary">atpA</name>
    <name type="ordered locus">Msil_0341</name>
</gene>
<dbReference type="EC" id="7.1.2.2" evidence="1"/>
<dbReference type="EMBL" id="CP001280">
    <property type="protein sequence ID" value="ACK49320.1"/>
    <property type="molecule type" value="Genomic_DNA"/>
</dbReference>
<dbReference type="RefSeq" id="WP_012589390.1">
    <property type="nucleotide sequence ID" value="NC_011666.1"/>
</dbReference>
<dbReference type="SMR" id="B8EQP9"/>
<dbReference type="STRING" id="395965.Msil_0341"/>
<dbReference type="KEGG" id="msl:Msil_0341"/>
<dbReference type="eggNOG" id="COG0056">
    <property type="taxonomic scope" value="Bacteria"/>
</dbReference>
<dbReference type="HOGENOM" id="CLU_010091_2_1_5"/>
<dbReference type="OrthoDB" id="9803053at2"/>
<dbReference type="Proteomes" id="UP000002257">
    <property type="component" value="Chromosome"/>
</dbReference>
<dbReference type="GO" id="GO:0005886">
    <property type="term" value="C:plasma membrane"/>
    <property type="evidence" value="ECO:0007669"/>
    <property type="project" value="UniProtKB-SubCell"/>
</dbReference>
<dbReference type="GO" id="GO:0045259">
    <property type="term" value="C:proton-transporting ATP synthase complex"/>
    <property type="evidence" value="ECO:0007669"/>
    <property type="project" value="UniProtKB-KW"/>
</dbReference>
<dbReference type="GO" id="GO:0043531">
    <property type="term" value="F:ADP binding"/>
    <property type="evidence" value="ECO:0007669"/>
    <property type="project" value="TreeGrafter"/>
</dbReference>
<dbReference type="GO" id="GO:0005524">
    <property type="term" value="F:ATP binding"/>
    <property type="evidence" value="ECO:0007669"/>
    <property type="project" value="UniProtKB-UniRule"/>
</dbReference>
<dbReference type="GO" id="GO:0046933">
    <property type="term" value="F:proton-transporting ATP synthase activity, rotational mechanism"/>
    <property type="evidence" value="ECO:0007669"/>
    <property type="project" value="UniProtKB-UniRule"/>
</dbReference>
<dbReference type="CDD" id="cd18113">
    <property type="entry name" value="ATP-synt_F1_alpha_C"/>
    <property type="match status" value="1"/>
</dbReference>
<dbReference type="CDD" id="cd18116">
    <property type="entry name" value="ATP-synt_F1_alpha_N"/>
    <property type="match status" value="1"/>
</dbReference>
<dbReference type="CDD" id="cd01132">
    <property type="entry name" value="F1-ATPase_alpha_CD"/>
    <property type="match status" value="1"/>
</dbReference>
<dbReference type="FunFam" id="1.20.150.20:FF:000001">
    <property type="entry name" value="ATP synthase subunit alpha"/>
    <property type="match status" value="1"/>
</dbReference>
<dbReference type="FunFam" id="2.40.30.20:FF:000001">
    <property type="entry name" value="ATP synthase subunit alpha"/>
    <property type="match status" value="1"/>
</dbReference>
<dbReference type="FunFam" id="3.40.50.300:FF:002432">
    <property type="entry name" value="ATP synthase subunit alpha, mitochondrial"/>
    <property type="match status" value="1"/>
</dbReference>
<dbReference type="Gene3D" id="2.40.30.20">
    <property type="match status" value="1"/>
</dbReference>
<dbReference type="Gene3D" id="1.20.150.20">
    <property type="entry name" value="ATP synthase alpha/beta chain, C-terminal domain"/>
    <property type="match status" value="1"/>
</dbReference>
<dbReference type="Gene3D" id="3.40.50.300">
    <property type="entry name" value="P-loop containing nucleotide triphosphate hydrolases"/>
    <property type="match status" value="1"/>
</dbReference>
<dbReference type="HAMAP" id="MF_01346">
    <property type="entry name" value="ATP_synth_alpha_bact"/>
    <property type="match status" value="1"/>
</dbReference>
<dbReference type="InterPro" id="IPR023366">
    <property type="entry name" value="ATP_synth_asu-like_sf"/>
</dbReference>
<dbReference type="InterPro" id="IPR000793">
    <property type="entry name" value="ATP_synth_asu_C"/>
</dbReference>
<dbReference type="InterPro" id="IPR038376">
    <property type="entry name" value="ATP_synth_asu_C_sf"/>
</dbReference>
<dbReference type="InterPro" id="IPR033732">
    <property type="entry name" value="ATP_synth_F1_a_nt-bd_dom"/>
</dbReference>
<dbReference type="InterPro" id="IPR005294">
    <property type="entry name" value="ATP_synth_F1_asu"/>
</dbReference>
<dbReference type="InterPro" id="IPR020003">
    <property type="entry name" value="ATPase_a/bsu_AS"/>
</dbReference>
<dbReference type="InterPro" id="IPR004100">
    <property type="entry name" value="ATPase_F1/V1/A1_a/bsu_N"/>
</dbReference>
<dbReference type="InterPro" id="IPR036121">
    <property type="entry name" value="ATPase_F1/V1/A1_a/bsu_N_sf"/>
</dbReference>
<dbReference type="InterPro" id="IPR000194">
    <property type="entry name" value="ATPase_F1/V1/A1_a/bsu_nucl-bd"/>
</dbReference>
<dbReference type="InterPro" id="IPR027417">
    <property type="entry name" value="P-loop_NTPase"/>
</dbReference>
<dbReference type="NCBIfam" id="TIGR00962">
    <property type="entry name" value="atpA"/>
    <property type="match status" value="1"/>
</dbReference>
<dbReference type="NCBIfam" id="NF009884">
    <property type="entry name" value="PRK13343.1"/>
    <property type="match status" value="1"/>
</dbReference>
<dbReference type="PANTHER" id="PTHR48082">
    <property type="entry name" value="ATP SYNTHASE SUBUNIT ALPHA, MITOCHONDRIAL"/>
    <property type="match status" value="1"/>
</dbReference>
<dbReference type="PANTHER" id="PTHR48082:SF2">
    <property type="entry name" value="ATP SYNTHASE SUBUNIT ALPHA, MITOCHONDRIAL"/>
    <property type="match status" value="1"/>
</dbReference>
<dbReference type="Pfam" id="PF00006">
    <property type="entry name" value="ATP-synt_ab"/>
    <property type="match status" value="1"/>
</dbReference>
<dbReference type="Pfam" id="PF00306">
    <property type="entry name" value="ATP-synt_ab_C"/>
    <property type="match status" value="1"/>
</dbReference>
<dbReference type="Pfam" id="PF02874">
    <property type="entry name" value="ATP-synt_ab_N"/>
    <property type="match status" value="1"/>
</dbReference>
<dbReference type="PIRSF" id="PIRSF039088">
    <property type="entry name" value="F_ATPase_subunit_alpha"/>
    <property type="match status" value="1"/>
</dbReference>
<dbReference type="SUPFAM" id="SSF47917">
    <property type="entry name" value="C-terminal domain of alpha and beta subunits of F1 ATP synthase"/>
    <property type="match status" value="1"/>
</dbReference>
<dbReference type="SUPFAM" id="SSF50615">
    <property type="entry name" value="N-terminal domain of alpha and beta subunits of F1 ATP synthase"/>
    <property type="match status" value="1"/>
</dbReference>
<dbReference type="SUPFAM" id="SSF52540">
    <property type="entry name" value="P-loop containing nucleoside triphosphate hydrolases"/>
    <property type="match status" value="1"/>
</dbReference>
<dbReference type="PROSITE" id="PS00152">
    <property type="entry name" value="ATPASE_ALPHA_BETA"/>
    <property type="match status" value="1"/>
</dbReference>
<organism>
    <name type="scientific">Methylocella silvestris (strain DSM 15510 / CIP 108128 / LMG 27833 / NCIMB 13906 / BL2)</name>
    <dbReference type="NCBI Taxonomy" id="395965"/>
    <lineage>
        <taxon>Bacteria</taxon>
        <taxon>Pseudomonadati</taxon>
        <taxon>Pseudomonadota</taxon>
        <taxon>Alphaproteobacteria</taxon>
        <taxon>Hyphomicrobiales</taxon>
        <taxon>Beijerinckiaceae</taxon>
        <taxon>Methylocella</taxon>
    </lineage>
</organism>